<protein>
    <recommendedName>
        <fullName evidence="1">Large ribosomal subunit protein uL11</fullName>
    </recommendedName>
    <alternativeName>
        <fullName evidence="2">50S ribosomal protein L11</fullName>
    </alternativeName>
</protein>
<comment type="function">
    <text evidence="1">Forms part of the ribosomal stalk which helps the ribosome interact with GTP-bound translation factors.</text>
</comment>
<comment type="subunit">
    <text evidence="1">Part of the ribosomal stalk of the 50S ribosomal subunit. Interacts with L10 and the large rRNA to form the base of the stalk. L10 forms an elongated spine to which L12 dimers bind in a sequential fashion forming a multimeric L10(L12)X complex.</text>
</comment>
<comment type="PTM">
    <text evidence="1">One or more lysine residues are methylated.</text>
</comment>
<comment type="similarity">
    <text evidence="1">Belongs to the universal ribosomal protein uL11 family.</text>
</comment>
<evidence type="ECO:0000255" key="1">
    <source>
        <dbReference type="HAMAP-Rule" id="MF_00736"/>
    </source>
</evidence>
<evidence type="ECO:0000305" key="2"/>
<accession>B9KYX3</accession>
<feature type="chain" id="PRO_1000195737" description="Large ribosomal subunit protein uL11">
    <location>
        <begin position="1"/>
        <end position="141"/>
    </location>
</feature>
<sequence>MAKKVKAIVKLQLPAGKATPAPPVGPALGQHGVPIMNFVKEYNEKTAHLAGQIIPVVVTIYEDRSFTFVLKTPPAADLLRRAAGIEKGAADPKRQKVGRVTREQIREIAQLKMPDLNARDLEAAMRMIEGTARSMGIEVVG</sequence>
<reference key="1">
    <citation type="journal article" date="2009" name="PLoS ONE">
        <title>Complete genome sequence of the aerobic CO-oxidizing thermophile Thermomicrobium roseum.</title>
        <authorList>
            <person name="Wu D."/>
            <person name="Raymond J."/>
            <person name="Wu M."/>
            <person name="Chatterji S."/>
            <person name="Ren Q."/>
            <person name="Graham J.E."/>
            <person name="Bryant D.A."/>
            <person name="Robb F."/>
            <person name="Colman A."/>
            <person name="Tallon L.J."/>
            <person name="Badger J.H."/>
            <person name="Madupu R."/>
            <person name="Ward N.L."/>
            <person name="Eisen J.A."/>
        </authorList>
    </citation>
    <scope>NUCLEOTIDE SEQUENCE [LARGE SCALE GENOMIC DNA]</scope>
    <source>
        <strain>ATCC 27502 / DSM 5159 / P-2</strain>
    </source>
</reference>
<name>RL11_THERP</name>
<organism>
    <name type="scientific">Thermomicrobium roseum (strain ATCC 27502 / DSM 5159 / P-2)</name>
    <dbReference type="NCBI Taxonomy" id="309801"/>
    <lineage>
        <taxon>Bacteria</taxon>
        <taxon>Pseudomonadati</taxon>
        <taxon>Thermomicrobiota</taxon>
        <taxon>Thermomicrobia</taxon>
        <taxon>Thermomicrobiales</taxon>
        <taxon>Thermomicrobiaceae</taxon>
        <taxon>Thermomicrobium</taxon>
    </lineage>
</organism>
<keyword id="KW-0488">Methylation</keyword>
<keyword id="KW-1185">Reference proteome</keyword>
<keyword id="KW-0687">Ribonucleoprotein</keyword>
<keyword id="KW-0689">Ribosomal protein</keyword>
<keyword id="KW-0694">RNA-binding</keyword>
<keyword id="KW-0699">rRNA-binding</keyword>
<dbReference type="EMBL" id="CP001275">
    <property type="protein sequence ID" value="ACM04646.1"/>
    <property type="molecule type" value="Genomic_DNA"/>
</dbReference>
<dbReference type="RefSeq" id="WP_012642073.1">
    <property type="nucleotide sequence ID" value="NC_011959.1"/>
</dbReference>
<dbReference type="SMR" id="B9KYX3"/>
<dbReference type="STRING" id="309801.trd_0681"/>
<dbReference type="KEGG" id="tro:trd_0681"/>
<dbReference type="eggNOG" id="COG0080">
    <property type="taxonomic scope" value="Bacteria"/>
</dbReference>
<dbReference type="HOGENOM" id="CLU_074237_2_1_0"/>
<dbReference type="OrthoDB" id="9802408at2"/>
<dbReference type="Proteomes" id="UP000000447">
    <property type="component" value="Chromosome"/>
</dbReference>
<dbReference type="GO" id="GO:0022625">
    <property type="term" value="C:cytosolic large ribosomal subunit"/>
    <property type="evidence" value="ECO:0007669"/>
    <property type="project" value="TreeGrafter"/>
</dbReference>
<dbReference type="GO" id="GO:0070180">
    <property type="term" value="F:large ribosomal subunit rRNA binding"/>
    <property type="evidence" value="ECO:0007669"/>
    <property type="project" value="UniProtKB-UniRule"/>
</dbReference>
<dbReference type="GO" id="GO:0003735">
    <property type="term" value="F:structural constituent of ribosome"/>
    <property type="evidence" value="ECO:0007669"/>
    <property type="project" value="InterPro"/>
</dbReference>
<dbReference type="GO" id="GO:0006412">
    <property type="term" value="P:translation"/>
    <property type="evidence" value="ECO:0007669"/>
    <property type="project" value="UniProtKB-UniRule"/>
</dbReference>
<dbReference type="CDD" id="cd00349">
    <property type="entry name" value="Ribosomal_L11"/>
    <property type="match status" value="1"/>
</dbReference>
<dbReference type="FunFam" id="1.10.10.250:FF:000001">
    <property type="entry name" value="50S ribosomal protein L11"/>
    <property type="match status" value="1"/>
</dbReference>
<dbReference type="FunFam" id="3.30.1550.10:FF:000001">
    <property type="entry name" value="50S ribosomal protein L11"/>
    <property type="match status" value="1"/>
</dbReference>
<dbReference type="Gene3D" id="1.10.10.250">
    <property type="entry name" value="Ribosomal protein L11, C-terminal domain"/>
    <property type="match status" value="1"/>
</dbReference>
<dbReference type="Gene3D" id="3.30.1550.10">
    <property type="entry name" value="Ribosomal protein L11/L12, N-terminal domain"/>
    <property type="match status" value="1"/>
</dbReference>
<dbReference type="HAMAP" id="MF_00736">
    <property type="entry name" value="Ribosomal_uL11"/>
    <property type="match status" value="1"/>
</dbReference>
<dbReference type="InterPro" id="IPR000911">
    <property type="entry name" value="Ribosomal_uL11"/>
</dbReference>
<dbReference type="InterPro" id="IPR006519">
    <property type="entry name" value="Ribosomal_uL11_bac-typ"/>
</dbReference>
<dbReference type="InterPro" id="IPR020783">
    <property type="entry name" value="Ribosomal_uL11_C"/>
</dbReference>
<dbReference type="InterPro" id="IPR036769">
    <property type="entry name" value="Ribosomal_uL11_C_sf"/>
</dbReference>
<dbReference type="InterPro" id="IPR020785">
    <property type="entry name" value="Ribosomal_uL11_CS"/>
</dbReference>
<dbReference type="InterPro" id="IPR020784">
    <property type="entry name" value="Ribosomal_uL11_N"/>
</dbReference>
<dbReference type="InterPro" id="IPR036796">
    <property type="entry name" value="Ribosomal_uL11_N_sf"/>
</dbReference>
<dbReference type="NCBIfam" id="TIGR01632">
    <property type="entry name" value="L11_bact"/>
    <property type="match status" value="1"/>
</dbReference>
<dbReference type="PANTHER" id="PTHR11661">
    <property type="entry name" value="60S RIBOSOMAL PROTEIN L12"/>
    <property type="match status" value="1"/>
</dbReference>
<dbReference type="PANTHER" id="PTHR11661:SF1">
    <property type="entry name" value="LARGE RIBOSOMAL SUBUNIT PROTEIN UL11M"/>
    <property type="match status" value="1"/>
</dbReference>
<dbReference type="Pfam" id="PF00298">
    <property type="entry name" value="Ribosomal_L11"/>
    <property type="match status" value="1"/>
</dbReference>
<dbReference type="Pfam" id="PF03946">
    <property type="entry name" value="Ribosomal_L11_N"/>
    <property type="match status" value="1"/>
</dbReference>
<dbReference type="SMART" id="SM00649">
    <property type="entry name" value="RL11"/>
    <property type="match status" value="1"/>
</dbReference>
<dbReference type="SUPFAM" id="SSF54747">
    <property type="entry name" value="Ribosomal L11/L12e N-terminal domain"/>
    <property type="match status" value="1"/>
</dbReference>
<dbReference type="SUPFAM" id="SSF46906">
    <property type="entry name" value="Ribosomal protein L11, C-terminal domain"/>
    <property type="match status" value="1"/>
</dbReference>
<dbReference type="PROSITE" id="PS00359">
    <property type="entry name" value="RIBOSOMAL_L11"/>
    <property type="match status" value="1"/>
</dbReference>
<proteinExistence type="inferred from homology"/>
<gene>
    <name evidence="1" type="primary">rplK</name>
    <name type="ordered locus">trd_0681</name>
</gene>